<reference key="1">
    <citation type="submission" date="2006-11" db="EMBL/GenBank/DDBJ databases">
        <title>Sequence of Campylobacter fetus subsp. fetus 82-40.</title>
        <authorList>
            <person name="Fouts D.E."/>
            <person name="Nelson K.E."/>
        </authorList>
    </citation>
    <scope>NUCLEOTIDE SEQUENCE [LARGE SCALE GENOMIC DNA]</scope>
    <source>
        <strain>82-40</strain>
    </source>
</reference>
<dbReference type="EC" id="3.4.25.2" evidence="1"/>
<dbReference type="EMBL" id="CP000487">
    <property type="protein sequence ID" value="ABK82496.1"/>
    <property type="molecule type" value="Genomic_DNA"/>
</dbReference>
<dbReference type="RefSeq" id="WP_002849553.1">
    <property type="nucleotide sequence ID" value="NC_008599.1"/>
</dbReference>
<dbReference type="SMR" id="A0RPN4"/>
<dbReference type="GeneID" id="61064830"/>
<dbReference type="KEGG" id="cff:CFF8240_1001"/>
<dbReference type="eggNOG" id="COG5405">
    <property type="taxonomic scope" value="Bacteria"/>
</dbReference>
<dbReference type="HOGENOM" id="CLU_093872_1_1_7"/>
<dbReference type="Proteomes" id="UP000000760">
    <property type="component" value="Chromosome"/>
</dbReference>
<dbReference type="GO" id="GO:0009376">
    <property type="term" value="C:HslUV protease complex"/>
    <property type="evidence" value="ECO:0007669"/>
    <property type="project" value="UniProtKB-UniRule"/>
</dbReference>
<dbReference type="GO" id="GO:0005839">
    <property type="term" value="C:proteasome core complex"/>
    <property type="evidence" value="ECO:0007669"/>
    <property type="project" value="InterPro"/>
</dbReference>
<dbReference type="GO" id="GO:0046872">
    <property type="term" value="F:metal ion binding"/>
    <property type="evidence" value="ECO:0007669"/>
    <property type="project" value="UniProtKB-KW"/>
</dbReference>
<dbReference type="GO" id="GO:0004298">
    <property type="term" value="F:threonine-type endopeptidase activity"/>
    <property type="evidence" value="ECO:0007669"/>
    <property type="project" value="UniProtKB-KW"/>
</dbReference>
<dbReference type="GO" id="GO:0051603">
    <property type="term" value="P:proteolysis involved in protein catabolic process"/>
    <property type="evidence" value="ECO:0007669"/>
    <property type="project" value="InterPro"/>
</dbReference>
<dbReference type="CDD" id="cd01913">
    <property type="entry name" value="protease_HslV"/>
    <property type="match status" value="1"/>
</dbReference>
<dbReference type="Gene3D" id="3.60.20.10">
    <property type="entry name" value="Glutamine Phosphoribosylpyrophosphate, subunit 1, domain 1"/>
    <property type="match status" value="1"/>
</dbReference>
<dbReference type="HAMAP" id="MF_00248">
    <property type="entry name" value="HslV"/>
    <property type="match status" value="1"/>
</dbReference>
<dbReference type="InterPro" id="IPR022281">
    <property type="entry name" value="ATP-dep_Prtase_HsIV_su"/>
</dbReference>
<dbReference type="InterPro" id="IPR029055">
    <property type="entry name" value="Ntn_hydrolases_N"/>
</dbReference>
<dbReference type="InterPro" id="IPR001353">
    <property type="entry name" value="Proteasome_sua/b"/>
</dbReference>
<dbReference type="InterPro" id="IPR023333">
    <property type="entry name" value="Proteasome_suB-type"/>
</dbReference>
<dbReference type="NCBIfam" id="TIGR03692">
    <property type="entry name" value="ATP_dep_HslV"/>
    <property type="match status" value="1"/>
</dbReference>
<dbReference type="NCBIfam" id="NF003964">
    <property type="entry name" value="PRK05456.1"/>
    <property type="match status" value="1"/>
</dbReference>
<dbReference type="PANTHER" id="PTHR32194:SF0">
    <property type="entry name" value="ATP-DEPENDENT PROTEASE SUBUNIT HSLV"/>
    <property type="match status" value="1"/>
</dbReference>
<dbReference type="PANTHER" id="PTHR32194">
    <property type="entry name" value="METALLOPROTEASE TLDD"/>
    <property type="match status" value="1"/>
</dbReference>
<dbReference type="Pfam" id="PF00227">
    <property type="entry name" value="Proteasome"/>
    <property type="match status" value="1"/>
</dbReference>
<dbReference type="PIRSF" id="PIRSF039093">
    <property type="entry name" value="HslV"/>
    <property type="match status" value="1"/>
</dbReference>
<dbReference type="SUPFAM" id="SSF56235">
    <property type="entry name" value="N-terminal nucleophile aminohydrolases (Ntn hydrolases)"/>
    <property type="match status" value="1"/>
</dbReference>
<dbReference type="PROSITE" id="PS51476">
    <property type="entry name" value="PROTEASOME_BETA_2"/>
    <property type="match status" value="1"/>
</dbReference>
<evidence type="ECO:0000255" key="1">
    <source>
        <dbReference type="HAMAP-Rule" id="MF_00248"/>
    </source>
</evidence>
<accession>A0RPN4</accession>
<sequence length="180" mass="19620">MFHATTILAYKGNKGSIIGGDGQVSFGNTVLKGNAVKIRKLLGGKILAGFAGSTADAFNLFDMFERILESTKGDLLKAVIEFSKEWRKDKVLRKLEAMMLVLDREHIFLLSGTGDVVEPEDGKIAAIGSGGNYALAAARALDKFADINEEELVKESLKIAGEICIYTNTNIKTYALWDEK</sequence>
<feature type="chain" id="PRO_1000012597" description="ATP-dependent protease subunit HslV">
    <location>
        <begin position="1"/>
        <end position="180"/>
    </location>
</feature>
<feature type="active site" evidence="1">
    <location>
        <position position="5"/>
    </location>
</feature>
<feature type="binding site" evidence="1">
    <location>
        <position position="161"/>
    </location>
    <ligand>
        <name>Na(+)</name>
        <dbReference type="ChEBI" id="CHEBI:29101"/>
    </ligand>
</feature>
<feature type="binding site" evidence="1">
    <location>
        <position position="164"/>
    </location>
    <ligand>
        <name>Na(+)</name>
        <dbReference type="ChEBI" id="CHEBI:29101"/>
    </ligand>
</feature>
<feature type="binding site" evidence="1">
    <location>
        <position position="167"/>
    </location>
    <ligand>
        <name>Na(+)</name>
        <dbReference type="ChEBI" id="CHEBI:29101"/>
    </ligand>
</feature>
<name>HSLV_CAMFF</name>
<proteinExistence type="inferred from homology"/>
<comment type="function">
    <text evidence="1">Protease subunit of a proteasome-like degradation complex believed to be a general protein degrading machinery.</text>
</comment>
<comment type="catalytic activity">
    <reaction evidence="1">
        <text>ATP-dependent cleavage of peptide bonds with broad specificity.</text>
        <dbReference type="EC" id="3.4.25.2"/>
    </reaction>
</comment>
<comment type="activity regulation">
    <text evidence="1">Allosterically activated by HslU binding.</text>
</comment>
<comment type="subunit">
    <text evidence="1">A double ring-shaped homohexamer of HslV is capped on each side by a ring-shaped HslU homohexamer. The assembly of the HslU/HslV complex is dependent on binding of ATP.</text>
</comment>
<comment type="subcellular location">
    <subcellularLocation>
        <location evidence="1">Cytoplasm</location>
    </subcellularLocation>
</comment>
<comment type="similarity">
    <text evidence="1">Belongs to the peptidase T1B family. HslV subfamily.</text>
</comment>
<protein>
    <recommendedName>
        <fullName evidence="1">ATP-dependent protease subunit HslV</fullName>
        <ecNumber evidence="1">3.4.25.2</ecNumber>
    </recommendedName>
</protein>
<keyword id="KW-0021">Allosteric enzyme</keyword>
<keyword id="KW-0963">Cytoplasm</keyword>
<keyword id="KW-0378">Hydrolase</keyword>
<keyword id="KW-0479">Metal-binding</keyword>
<keyword id="KW-0645">Protease</keyword>
<keyword id="KW-0915">Sodium</keyword>
<keyword id="KW-0888">Threonine protease</keyword>
<organism>
    <name type="scientific">Campylobacter fetus subsp. fetus (strain 82-40)</name>
    <dbReference type="NCBI Taxonomy" id="360106"/>
    <lineage>
        <taxon>Bacteria</taxon>
        <taxon>Pseudomonadati</taxon>
        <taxon>Campylobacterota</taxon>
        <taxon>Epsilonproteobacteria</taxon>
        <taxon>Campylobacterales</taxon>
        <taxon>Campylobacteraceae</taxon>
        <taxon>Campylobacter</taxon>
    </lineage>
</organism>
<gene>
    <name evidence="1" type="primary">hslV</name>
    <name type="ordered locus">CFF8240_1001</name>
</gene>